<feature type="chain" id="PRO_0000283198" description="Putative F-box/kelch-repeat protein At2g29800">
    <location>
        <begin position="1"/>
        <end position="414"/>
    </location>
</feature>
<feature type="domain" description="F-box">
    <location>
        <begin position="58"/>
        <end position="105"/>
    </location>
</feature>
<feature type="repeat" description="Kelch 1">
    <location>
        <begin position="163"/>
        <end position="211"/>
    </location>
</feature>
<feature type="repeat" description="Kelch 2">
    <location>
        <begin position="212"/>
        <end position="258"/>
    </location>
</feature>
<feature type="repeat" description="Kelch 3">
    <location>
        <begin position="263"/>
        <end position="302"/>
    </location>
</feature>
<feature type="repeat" description="Kelch 4">
    <location>
        <begin position="305"/>
        <end position="349"/>
    </location>
</feature>
<feature type="region of interest" description="Disordered" evidence="1">
    <location>
        <begin position="1"/>
        <end position="61"/>
    </location>
</feature>
<feature type="compositionally biased region" description="Basic and acidic residues" evidence="1">
    <location>
        <begin position="20"/>
        <end position="35"/>
    </location>
</feature>
<feature type="compositionally biased region" description="Acidic residues" evidence="1">
    <location>
        <begin position="40"/>
        <end position="54"/>
    </location>
</feature>
<evidence type="ECO:0000256" key="1">
    <source>
        <dbReference type="SAM" id="MobiDB-lite"/>
    </source>
</evidence>
<dbReference type="EMBL" id="AC005496">
    <property type="protein sequence ID" value="AAC35221.1"/>
    <property type="molecule type" value="Genomic_DNA"/>
</dbReference>
<dbReference type="EMBL" id="CP002685">
    <property type="protein sequence ID" value="AEC08306.1"/>
    <property type="molecule type" value="Genomic_DNA"/>
</dbReference>
<dbReference type="PIR" id="G84700">
    <property type="entry name" value="G84700"/>
</dbReference>
<dbReference type="RefSeq" id="NP_180541.1">
    <property type="nucleotide sequence ID" value="NM_128534.2"/>
</dbReference>
<dbReference type="SMR" id="O82376"/>
<dbReference type="STRING" id="3702.O82376"/>
<dbReference type="GlyGen" id="O82376">
    <property type="glycosylation" value="1 site"/>
</dbReference>
<dbReference type="iPTMnet" id="O82376"/>
<dbReference type="PaxDb" id="3702-AT2G29800.1"/>
<dbReference type="EnsemblPlants" id="AT2G29800.1">
    <property type="protein sequence ID" value="AT2G29800.1"/>
    <property type="gene ID" value="AT2G29800"/>
</dbReference>
<dbReference type="GeneID" id="817530"/>
<dbReference type="Gramene" id="AT2G29800.1">
    <property type="protein sequence ID" value="AT2G29800.1"/>
    <property type="gene ID" value="AT2G29800"/>
</dbReference>
<dbReference type="KEGG" id="ath:AT2G29800"/>
<dbReference type="Araport" id="AT2G29800"/>
<dbReference type="TAIR" id="AT2G29800"/>
<dbReference type="eggNOG" id="KOG1072">
    <property type="taxonomic scope" value="Eukaryota"/>
</dbReference>
<dbReference type="HOGENOM" id="CLU_032521_1_1_1"/>
<dbReference type="InParanoid" id="O82376"/>
<dbReference type="OMA" id="DVWCVEV"/>
<dbReference type="PhylomeDB" id="O82376"/>
<dbReference type="PRO" id="PR:O82376"/>
<dbReference type="Proteomes" id="UP000006548">
    <property type="component" value="Chromosome 2"/>
</dbReference>
<dbReference type="ExpressionAtlas" id="O82376">
    <property type="expression patterns" value="differential"/>
</dbReference>
<dbReference type="Gene3D" id="2.120.10.80">
    <property type="entry name" value="Kelch-type beta propeller"/>
    <property type="match status" value="2"/>
</dbReference>
<dbReference type="InterPro" id="IPR050354">
    <property type="entry name" value="F-box/kelch-repeat_ARATH"/>
</dbReference>
<dbReference type="InterPro" id="IPR015915">
    <property type="entry name" value="Kelch-typ_b-propeller"/>
</dbReference>
<dbReference type="InterPro" id="IPR006652">
    <property type="entry name" value="Kelch_1"/>
</dbReference>
<dbReference type="PANTHER" id="PTHR24414:SF65">
    <property type="entry name" value="F-BOX DOMAIN-CONTAINING PROTEIN"/>
    <property type="match status" value="1"/>
</dbReference>
<dbReference type="PANTHER" id="PTHR24414">
    <property type="entry name" value="F-BOX/KELCH-REPEAT PROTEIN SKIP4"/>
    <property type="match status" value="1"/>
</dbReference>
<dbReference type="Pfam" id="PF25210">
    <property type="entry name" value="Kelch_FKB95"/>
    <property type="match status" value="1"/>
</dbReference>
<dbReference type="SMART" id="SM00612">
    <property type="entry name" value="Kelch"/>
    <property type="match status" value="2"/>
</dbReference>
<dbReference type="SUPFAM" id="SSF117281">
    <property type="entry name" value="Kelch motif"/>
    <property type="match status" value="1"/>
</dbReference>
<gene>
    <name type="ordered locus">At2g29800</name>
    <name type="ORF">T27A16.10</name>
</gene>
<protein>
    <recommendedName>
        <fullName>Putative F-box/kelch-repeat protein At2g29800</fullName>
    </recommendedName>
</protein>
<reference key="1">
    <citation type="journal article" date="1999" name="Nature">
        <title>Sequence and analysis of chromosome 2 of the plant Arabidopsis thaliana.</title>
        <authorList>
            <person name="Lin X."/>
            <person name="Kaul S."/>
            <person name="Rounsley S.D."/>
            <person name="Shea T.P."/>
            <person name="Benito M.-I."/>
            <person name="Town C.D."/>
            <person name="Fujii C.Y."/>
            <person name="Mason T.M."/>
            <person name="Bowman C.L."/>
            <person name="Barnstead M.E."/>
            <person name="Feldblyum T.V."/>
            <person name="Buell C.R."/>
            <person name="Ketchum K.A."/>
            <person name="Lee J.J."/>
            <person name="Ronning C.M."/>
            <person name="Koo H.L."/>
            <person name="Moffat K.S."/>
            <person name="Cronin L.A."/>
            <person name="Shen M."/>
            <person name="Pai G."/>
            <person name="Van Aken S."/>
            <person name="Umayam L."/>
            <person name="Tallon L.J."/>
            <person name="Gill J.E."/>
            <person name="Adams M.D."/>
            <person name="Carrera A.J."/>
            <person name="Creasy T.H."/>
            <person name="Goodman H.M."/>
            <person name="Somerville C.R."/>
            <person name="Copenhaver G.P."/>
            <person name="Preuss D."/>
            <person name="Nierman W.C."/>
            <person name="White O."/>
            <person name="Eisen J.A."/>
            <person name="Salzberg S.L."/>
            <person name="Fraser C.M."/>
            <person name="Venter J.C."/>
        </authorList>
    </citation>
    <scope>NUCLEOTIDE SEQUENCE [LARGE SCALE GENOMIC DNA]</scope>
    <source>
        <strain>cv. Columbia</strain>
    </source>
</reference>
<reference key="2">
    <citation type="journal article" date="2017" name="Plant J.">
        <title>Araport11: a complete reannotation of the Arabidopsis thaliana reference genome.</title>
        <authorList>
            <person name="Cheng C.Y."/>
            <person name="Krishnakumar V."/>
            <person name="Chan A.P."/>
            <person name="Thibaud-Nissen F."/>
            <person name="Schobel S."/>
            <person name="Town C.D."/>
        </authorList>
    </citation>
    <scope>GENOME REANNOTATION</scope>
    <source>
        <strain>cv. Columbia</strain>
    </source>
</reference>
<sequence>MASISETSDDGSNGGVPNQKPEEPHKNPQEEKENQNENPNEADEEDDHQDEEVENVPPIPRKIPPVLIENTIAPLRRCHYPKLSLLSNAFRQVISSEDLFQVRSLIGSTEPVLYTLITFKYPTFEEGRWFILQRRNNTSLKLNCVTSLPPMFLGCTAVTIGHKIYVVGGYNFRYNKTISTVLEIDCRFNTCRHLRNMKRDRCSAVAGVIDGRIYVVAGRQRRFDDWVEVFDVETERWELVPGPFSSFASSSGKFIVHVVLDNKIYIMDGDYCFAYDPRRRRWETWGPESAQRSYWHLSSCVVDDLLYAIVPREIFGASIVVYDPRGIAWRPVMGLEFWPNLVYFESKMANFGGKLVILGCYRSSFDYYRKDVWCVEVALEKHEDGQIWGKVESLSLVNAFPMSPFFELSRTVTI</sequence>
<accession>O82376</accession>
<organism>
    <name type="scientific">Arabidopsis thaliana</name>
    <name type="common">Mouse-ear cress</name>
    <dbReference type="NCBI Taxonomy" id="3702"/>
    <lineage>
        <taxon>Eukaryota</taxon>
        <taxon>Viridiplantae</taxon>
        <taxon>Streptophyta</taxon>
        <taxon>Embryophyta</taxon>
        <taxon>Tracheophyta</taxon>
        <taxon>Spermatophyta</taxon>
        <taxon>Magnoliopsida</taxon>
        <taxon>eudicotyledons</taxon>
        <taxon>Gunneridae</taxon>
        <taxon>Pentapetalae</taxon>
        <taxon>rosids</taxon>
        <taxon>malvids</taxon>
        <taxon>Brassicales</taxon>
        <taxon>Brassicaceae</taxon>
        <taxon>Camelineae</taxon>
        <taxon>Arabidopsis</taxon>
    </lineage>
</organism>
<name>FBK38_ARATH</name>
<proteinExistence type="predicted"/>
<keyword id="KW-0880">Kelch repeat</keyword>
<keyword id="KW-1185">Reference proteome</keyword>
<keyword id="KW-0677">Repeat</keyword>